<dbReference type="EMBL" id="AF473827">
    <property type="protein sequence ID" value="AAO33474.1"/>
    <property type="molecule type" value="mRNA"/>
</dbReference>
<dbReference type="EMBL" id="FJ503005">
    <property type="protein sequence ID" value="ACT32610.1"/>
    <property type="molecule type" value="Genomic_DNA"/>
</dbReference>
<dbReference type="GlyCosmos" id="Q86RQ1">
    <property type="glycosylation" value="3 sites, No reported glycans"/>
</dbReference>
<dbReference type="GO" id="GO:0005576">
    <property type="term" value="C:extracellular region"/>
    <property type="evidence" value="ECO:0007669"/>
    <property type="project" value="UniProtKB-SubCell"/>
</dbReference>
<dbReference type="GO" id="GO:0030430">
    <property type="term" value="C:host cell cytoplasm"/>
    <property type="evidence" value="ECO:0007669"/>
    <property type="project" value="UniProtKB-SubCell"/>
</dbReference>
<dbReference type="GO" id="GO:0043655">
    <property type="term" value="C:host extracellular space"/>
    <property type="evidence" value="ECO:0007669"/>
    <property type="project" value="UniProtKB-SubCell"/>
</dbReference>
<dbReference type="GO" id="GO:0030154">
    <property type="term" value="P:cell differentiation"/>
    <property type="evidence" value="ECO:0007669"/>
    <property type="project" value="UniProtKB-KW"/>
</dbReference>
<accession>Q86RQ1</accession>
<evidence type="ECO:0000255" key="1"/>
<evidence type="ECO:0000255" key="2">
    <source>
        <dbReference type="PROSITE-ProRule" id="PRU00498"/>
    </source>
</evidence>
<evidence type="ECO:0000256" key="3">
    <source>
        <dbReference type="SAM" id="MobiDB-lite"/>
    </source>
</evidence>
<evidence type="ECO:0000269" key="4">
    <source>
    </source>
</evidence>
<evidence type="ECO:0000269" key="5">
    <source>
    </source>
</evidence>
<evidence type="ECO:0000269" key="6">
    <source>
    </source>
</evidence>
<evidence type="ECO:0000305" key="7"/>
<proteinExistence type="evidence at protein level"/>
<sequence>MPNIFKILLIVLLAVVSFRLSASTGDKKTANDGSGNNSSAGIGTKIKRIVTAGLLFTSLATGGAEAIGRSNAQGGNAAGLVPSHVTNRSMAPPPPPVQFEMGANRLEKMRAHLRELAEKMPVNESKRLSPSGPDPHHH</sequence>
<reference key="1">
    <citation type="journal article" date="2003" name="Mol. Plant Microbe Interact.">
        <title>The parasitome of the phytonematode Heterodera glycines.</title>
        <authorList>
            <person name="Gao B."/>
            <person name="Allen R."/>
            <person name="Maier T."/>
            <person name="Davis E.L."/>
            <person name="Baum T.J."/>
            <person name="Hussey R.S."/>
        </authorList>
    </citation>
    <scope>NUCLEOTIDE SEQUENCE [MRNA]</scope>
    <scope>TISSUE SPECIFICITY</scope>
    <source>
        <tissue>Esophagus</tissue>
        <tissue>Gland</tissue>
    </source>
</reference>
<reference key="2">
    <citation type="journal article" date="2010" name="New Phytol.">
        <title>Dual roles for the variable domain in protein trafficking and host-specific recognition of Heterodera glycines CLE effector proteins.</title>
        <authorList>
            <person name="Wang J."/>
            <person name="Lee C."/>
            <person name="Replogle A."/>
            <person name="Joshi S."/>
            <person name="Korkin D."/>
            <person name="Hussey R."/>
            <person name="Baum T.J."/>
            <person name="Davis E.L."/>
            <person name="Wang X."/>
            <person name="Mitchum M.G."/>
        </authorList>
    </citation>
    <scope>NUCLEOTIDE SEQUENCE [GENOMIC DNA]</scope>
    <scope>FUNCTION</scope>
    <scope>TISSUE SPECIFICITY</scope>
    <scope>DEVELOPMENTAL STAGE</scope>
    <scope>SUBCELLULAR LOCATION</scope>
</reference>
<reference key="3">
    <citation type="journal article" date="2005" name="Mol. Plant Pathol.">
        <title>A parasitism gene from a plant-parasitic nematode with function similar to CLAVATA3/ESR (CLE) of Arabidopsis thaliana.</title>
        <authorList>
            <person name="Wang X."/>
            <person name="Mitchum M.G."/>
            <person name="Gao B."/>
            <person name="Li C."/>
            <person name="Diab H."/>
            <person name="Baum T.J."/>
            <person name="Hussey R.S."/>
            <person name="Davis E.L."/>
        </authorList>
    </citation>
    <scope>FUNCTION</scope>
    <scope>TISSUE SPECIFICITY</scope>
</reference>
<reference key="4">
    <citation type="journal article" date="2009" name="Mol. Plant Pathol.">
        <authorList>
            <person name="Davis E.L."/>
        </authorList>
    </citation>
    <scope>ERRATUM OF PUBMED:20565649</scope>
</reference>
<reference key="5">
    <citation type="journal article" date="2008" name="Curr. Opin. Plant Biol.">
        <title>Diverse and conserved roles of CLE peptides.</title>
        <authorList>
            <person name="Mitchum M.G."/>
            <person name="Wang X."/>
            <person name="Davis E.L."/>
        </authorList>
    </citation>
    <scope>REVIEW</scope>
</reference>
<gene>
    <name type="primary">CLE2</name>
    <name type="synonym">G4G12</name>
</gene>
<organism>
    <name type="scientific">Heterodera glycines</name>
    <name type="common">Soybean cyst nematode worm</name>
    <dbReference type="NCBI Taxonomy" id="51029"/>
    <lineage>
        <taxon>Eukaryota</taxon>
        <taxon>Metazoa</taxon>
        <taxon>Ecdysozoa</taxon>
        <taxon>Nematoda</taxon>
        <taxon>Chromadorea</taxon>
        <taxon>Rhabditida</taxon>
        <taxon>Tylenchina</taxon>
        <taxon>Tylenchomorpha</taxon>
        <taxon>Tylenchoidea</taxon>
        <taxon>Heteroderidae</taxon>
        <taxon>Heteroderinae</taxon>
        <taxon>Heterodera</taxon>
    </lineage>
</organism>
<keyword id="KW-0052">Apoplast</keyword>
<keyword id="KW-0221">Differentiation</keyword>
<keyword id="KW-0325">Glycoprotein</keyword>
<keyword id="KW-1035">Host cytoplasm</keyword>
<keyword id="KW-0964">Secreted</keyword>
<keyword id="KW-0732">Signal</keyword>
<feature type="signal peptide" evidence="1">
    <location>
        <begin position="1"/>
        <end position="22"/>
    </location>
</feature>
<feature type="chain" id="PRO_0000401216" description="CLAVATA3/ESR (CLE)-related protein 2">
    <location>
        <begin position="23"/>
        <end position="138"/>
    </location>
</feature>
<feature type="region of interest" description="Required for secretion from the host cytoplasm to the host apoplasm">
    <location>
        <begin position="23"/>
        <end position="90"/>
    </location>
</feature>
<feature type="region of interest" description="Disordered" evidence="3">
    <location>
        <begin position="66"/>
        <end position="97"/>
    </location>
</feature>
<feature type="region of interest" description="Disordered" evidence="3">
    <location>
        <begin position="116"/>
        <end position="138"/>
    </location>
</feature>
<feature type="short sequence motif" description="CLE">
    <location>
        <begin position="127"/>
        <end position="138"/>
    </location>
</feature>
<feature type="glycosylation site" description="N-linked (GlcNAc...) asparagine" evidence="2">
    <location>
        <position position="37"/>
    </location>
</feature>
<feature type="glycosylation site" description="N-linked (GlcNAc...) asparagine" evidence="2">
    <location>
        <position position="87"/>
    </location>
</feature>
<feature type="glycosylation site" description="N-linked (GlcNAc...) asparagine" evidence="2">
    <location>
        <position position="123"/>
    </location>
</feature>
<protein>
    <recommendedName>
        <fullName>CLAVATA3/ESR (CLE)-related protein 2</fullName>
        <shortName>CLE-like peptide 2</shortName>
    </recommendedName>
    <alternativeName>
        <fullName>Gland-specific protein G4G12</fullName>
        <shortName>Hg-G4G12</shortName>
    </alternativeName>
</protein>
<comment type="function">
    <text evidence="5 6">Mimics host plant CLE extracellular signal peptides that regulate cell fate. May play a role in the differentiation or division of feeding cells (syncytia) induced in plant roots during infection.</text>
</comment>
<comment type="subcellular location">
    <subcellularLocation>
        <location evidence="5">Secreted</location>
    </subcellularLocation>
    <subcellularLocation>
        <location evidence="5">Host cytoplasm</location>
    </subcellularLocation>
    <subcellularLocation>
        <location evidence="5">Host extracellular space</location>
    </subcellularLocation>
    <subcellularLocation>
        <location evidence="5">Secreted</location>
        <location evidence="5">Extracellular space</location>
        <location evidence="5">Apoplast</location>
    </subcellularLocation>
    <text evidence="5">Present in secretory granules within the dorsal esophageal gland secretory cell and in the dorsal gland ampulla (collecting reservoir) at the base of the nematode stylet. Secreted into host root cells via the nematode stylet to transform the recipient cells into enlarged multinucleate feeding cells called giant-cells or syncytia. Secreted to the host apoplasm from its cytoplasm via a plant secretory pathway.</text>
</comment>
<comment type="tissue specificity">
    <text evidence="4 5 6">Highly expressed exclusively within the dorsal esophageal gland cell during syncytium formation in host plants (at protein level).</text>
</comment>
<comment type="developmental stage">
    <text evidence="5">Strongly up-regulated during root colonization, from the onset of syncytium formation by parasitic second-stage juveniles (pJ2) through the J3?J4 molts of sedentary life stages that become adult females.</text>
</comment>
<comment type="similarity">
    <text evidence="7">Belongs to the CLV3/ESR signal peptide family.</text>
</comment>
<comment type="online information" name="Protein Spotlight">
    <link uri="https://www.proteinspotlight.org/back_issues/151/"/>
    <text>the root of the problem - Issue 151 of July 2013</text>
</comment>
<name>CLE2_HETGL</name>